<feature type="chain" id="PRO_1000134357" description="Protein-export protein SecB">
    <location>
        <begin position="1"/>
        <end position="152"/>
    </location>
</feature>
<comment type="function">
    <text evidence="1">One of the proteins required for the normal export of preproteins out of the cell cytoplasm. It is a molecular chaperone that binds to a subset of precursor proteins, maintaining them in a translocation-competent state. It also specifically binds to its receptor SecA.</text>
</comment>
<comment type="subunit">
    <text evidence="1">Homotetramer, a dimer of dimers. One homotetramer interacts with 1 SecA dimer.</text>
</comment>
<comment type="subcellular location">
    <subcellularLocation>
        <location evidence="1">Cytoplasm</location>
    </subcellularLocation>
</comment>
<comment type="similarity">
    <text evidence="1">Belongs to the SecB family.</text>
</comment>
<protein>
    <recommendedName>
        <fullName evidence="1">Protein-export protein SecB</fullName>
    </recommendedName>
</protein>
<sequence length="152" mass="17030">MSEEQQVQPQLALERIYTKDISFEVPGAQVFTKQWQPELNINLSSAAEKIDPTHFEVSLKVVVQANNDNETAFIVDVTQSGIFLIDNIEEDRLPYILGAYCPNILFPFLREAVNDLVTKGSFPQLLLTPINFDAEFEANMQRAQAAAVEGQA</sequence>
<proteinExistence type="inferred from homology"/>
<dbReference type="EMBL" id="CU459141">
    <property type="protein sequence ID" value="CAM88058.1"/>
    <property type="molecule type" value="Genomic_DNA"/>
</dbReference>
<dbReference type="RefSeq" id="WP_001288260.1">
    <property type="nucleotide sequence ID" value="NZ_JBDGFB010000008.1"/>
</dbReference>
<dbReference type="SMR" id="B0V4V4"/>
<dbReference type="EnsemblBacteria" id="CAM88058">
    <property type="protein sequence ID" value="CAM88058"/>
    <property type="gene ID" value="ABAYE3257"/>
</dbReference>
<dbReference type="GeneID" id="92892511"/>
<dbReference type="KEGG" id="aby:ABAYE3257"/>
<dbReference type="HOGENOM" id="CLU_111574_1_0_6"/>
<dbReference type="GO" id="GO:0005737">
    <property type="term" value="C:cytoplasm"/>
    <property type="evidence" value="ECO:0007669"/>
    <property type="project" value="UniProtKB-SubCell"/>
</dbReference>
<dbReference type="GO" id="GO:0051082">
    <property type="term" value="F:unfolded protein binding"/>
    <property type="evidence" value="ECO:0007669"/>
    <property type="project" value="InterPro"/>
</dbReference>
<dbReference type="GO" id="GO:0006457">
    <property type="term" value="P:protein folding"/>
    <property type="evidence" value="ECO:0007669"/>
    <property type="project" value="UniProtKB-UniRule"/>
</dbReference>
<dbReference type="GO" id="GO:0051262">
    <property type="term" value="P:protein tetramerization"/>
    <property type="evidence" value="ECO:0007669"/>
    <property type="project" value="InterPro"/>
</dbReference>
<dbReference type="GO" id="GO:0015031">
    <property type="term" value="P:protein transport"/>
    <property type="evidence" value="ECO:0007669"/>
    <property type="project" value="UniProtKB-UniRule"/>
</dbReference>
<dbReference type="Gene3D" id="3.10.420.10">
    <property type="entry name" value="SecB-like"/>
    <property type="match status" value="1"/>
</dbReference>
<dbReference type="HAMAP" id="MF_00821">
    <property type="entry name" value="SecB"/>
    <property type="match status" value="1"/>
</dbReference>
<dbReference type="InterPro" id="IPR003708">
    <property type="entry name" value="SecB"/>
</dbReference>
<dbReference type="InterPro" id="IPR035958">
    <property type="entry name" value="SecB-like_sf"/>
</dbReference>
<dbReference type="NCBIfam" id="NF004393">
    <property type="entry name" value="PRK05751.1-4"/>
    <property type="match status" value="1"/>
</dbReference>
<dbReference type="NCBIfam" id="TIGR00809">
    <property type="entry name" value="secB"/>
    <property type="match status" value="1"/>
</dbReference>
<dbReference type="PANTHER" id="PTHR36918">
    <property type="match status" value="1"/>
</dbReference>
<dbReference type="PANTHER" id="PTHR36918:SF1">
    <property type="entry name" value="PROTEIN-EXPORT PROTEIN SECB"/>
    <property type="match status" value="1"/>
</dbReference>
<dbReference type="Pfam" id="PF02556">
    <property type="entry name" value="SecB"/>
    <property type="match status" value="1"/>
</dbReference>
<dbReference type="PRINTS" id="PR01594">
    <property type="entry name" value="SECBCHAPRONE"/>
</dbReference>
<dbReference type="SUPFAM" id="SSF54611">
    <property type="entry name" value="SecB-like"/>
    <property type="match status" value="1"/>
</dbReference>
<gene>
    <name evidence="1" type="primary">secB</name>
    <name type="ordered locus">ABAYE3257</name>
</gene>
<keyword id="KW-0143">Chaperone</keyword>
<keyword id="KW-0963">Cytoplasm</keyword>
<keyword id="KW-0653">Protein transport</keyword>
<keyword id="KW-0811">Translocation</keyword>
<keyword id="KW-0813">Transport</keyword>
<reference key="1">
    <citation type="journal article" date="2008" name="PLoS ONE">
        <title>Comparative analysis of Acinetobacters: three genomes for three lifestyles.</title>
        <authorList>
            <person name="Vallenet D."/>
            <person name="Nordmann P."/>
            <person name="Barbe V."/>
            <person name="Poirel L."/>
            <person name="Mangenot S."/>
            <person name="Bataille E."/>
            <person name="Dossat C."/>
            <person name="Gas S."/>
            <person name="Kreimeyer A."/>
            <person name="Lenoble P."/>
            <person name="Oztas S."/>
            <person name="Poulain J."/>
            <person name="Segurens B."/>
            <person name="Robert C."/>
            <person name="Abergel C."/>
            <person name="Claverie J.-M."/>
            <person name="Raoult D."/>
            <person name="Medigue C."/>
            <person name="Weissenbach J."/>
            <person name="Cruveiller S."/>
        </authorList>
    </citation>
    <scope>NUCLEOTIDE SEQUENCE [LARGE SCALE GENOMIC DNA]</scope>
    <source>
        <strain>AYE</strain>
    </source>
</reference>
<accession>B0V4V4</accession>
<organism>
    <name type="scientific">Acinetobacter baumannii (strain AYE)</name>
    <dbReference type="NCBI Taxonomy" id="509173"/>
    <lineage>
        <taxon>Bacteria</taxon>
        <taxon>Pseudomonadati</taxon>
        <taxon>Pseudomonadota</taxon>
        <taxon>Gammaproteobacteria</taxon>
        <taxon>Moraxellales</taxon>
        <taxon>Moraxellaceae</taxon>
        <taxon>Acinetobacter</taxon>
        <taxon>Acinetobacter calcoaceticus/baumannii complex</taxon>
    </lineage>
</organism>
<name>SECB_ACIBY</name>
<evidence type="ECO:0000255" key="1">
    <source>
        <dbReference type="HAMAP-Rule" id="MF_00821"/>
    </source>
</evidence>